<protein>
    <recommendedName>
        <fullName evidence="1">Cell division protein FtsB</fullName>
    </recommendedName>
</protein>
<dbReference type="EMBL" id="AE004439">
    <property type="protein sequence ID" value="AAK03691.1"/>
    <property type="molecule type" value="Genomic_DNA"/>
</dbReference>
<dbReference type="RefSeq" id="WP_005718421.1">
    <property type="nucleotide sequence ID" value="NC_002663.1"/>
</dbReference>
<dbReference type="SMR" id="Q9CKK5"/>
<dbReference type="STRING" id="272843.PM1607"/>
<dbReference type="EnsemblBacteria" id="AAK03691">
    <property type="protein sequence ID" value="AAK03691"/>
    <property type="gene ID" value="PM1607"/>
</dbReference>
<dbReference type="GeneID" id="77206828"/>
<dbReference type="KEGG" id="pmu:PM1607"/>
<dbReference type="HOGENOM" id="CLU_134863_5_2_6"/>
<dbReference type="OrthoDB" id="7061211at2"/>
<dbReference type="Proteomes" id="UP000000809">
    <property type="component" value="Chromosome"/>
</dbReference>
<dbReference type="GO" id="GO:0032153">
    <property type="term" value="C:cell division site"/>
    <property type="evidence" value="ECO:0007669"/>
    <property type="project" value="UniProtKB-UniRule"/>
</dbReference>
<dbReference type="GO" id="GO:0030428">
    <property type="term" value="C:cell septum"/>
    <property type="evidence" value="ECO:0007669"/>
    <property type="project" value="TreeGrafter"/>
</dbReference>
<dbReference type="GO" id="GO:0005886">
    <property type="term" value="C:plasma membrane"/>
    <property type="evidence" value="ECO:0007669"/>
    <property type="project" value="UniProtKB-SubCell"/>
</dbReference>
<dbReference type="GO" id="GO:0043093">
    <property type="term" value="P:FtsZ-dependent cytokinesis"/>
    <property type="evidence" value="ECO:0007669"/>
    <property type="project" value="UniProtKB-UniRule"/>
</dbReference>
<dbReference type="HAMAP" id="MF_00599">
    <property type="entry name" value="FtsB"/>
    <property type="match status" value="1"/>
</dbReference>
<dbReference type="InterPro" id="IPR023081">
    <property type="entry name" value="Cell_div_FtsB"/>
</dbReference>
<dbReference type="InterPro" id="IPR007060">
    <property type="entry name" value="FtsL/DivIC"/>
</dbReference>
<dbReference type="NCBIfam" id="NF002058">
    <property type="entry name" value="PRK00888.1"/>
    <property type="match status" value="1"/>
</dbReference>
<dbReference type="PANTHER" id="PTHR37485">
    <property type="entry name" value="CELL DIVISION PROTEIN FTSB"/>
    <property type="match status" value="1"/>
</dbReference>
<dbReference type="PANTHER" id="PTHR37485:SF1">
    <property type="entry name" value="CELL DIVISION PROTEIN FTSB"/>
    <property type="match status" value="1"/>
</dbReference>
<dbReference type="Pfam" id="PF04977">
    <property type="entry name" value="DivIC"/>
    <property type="match status" value="1"/>
</dbReference>
<accession>Q9CKK5</accession>
<reference key="1">
    <citation type="journal article" date="2001" name="Proc. Natl. Acad. Sci. U.S.A.">
        <title>Complete genomic sequence of Pasteurella multocida Pm70.</title>
        <authorList>
            <person name="May B.J."/>
            <person name="Zhang Q."/>
            <person name="Li L.L."/>
            <person name="Paustian M.L."/>
            <person name="Whittam T.S."/>
            <person name="Kapur V."/>
        </authorList>
    </citation>
    <scope>NUCLEOTIDE SEQUENCE [LARGE SCALE GENOMIC DNA]</scope>
    <source>
        <strain>Pm70</strain>
    </source>
</reference>
<evidence type="ECO:0000255" key="1">
    <source>
        <dbReference type="HAMAP-Rule" id="MF_00599"/>
    </source>
</evidence>
<comment type="function">
    <text evidence="1">Essential cell division protein. May link together the upstream cell division proteins, which are predominantly cytoplasmic, with the downstream cell division proteins, which are predominantly periplasmic.</text>
</comment>
<comment type="subunit">
    <text evidence="1">Part of a complex composed of FtsB, FtsL and FtsQ.</text>
</comment>
<comment type="subcellular location">
    <subcellularLocation>
        <location evidence="1">Cell inner membrane</location>
        <topology evidence="1">Single-pass type II membrane protein</topology>
    </subcellularLocation>
    <text evidence="1">Localizes to the division septum.</text>
</comment>
<comment type="similarity">
    <text evidence="1">Belongs to the FtsB family.</text>
</comment>
<organism>
    <name type="scientific">Pasteurella multocida (strain Pm70)</name>
    <dbReference type="NCBI Taxonomy" id="272843"/>
    <lineage>
        <taxon>Bacteria</taxon>
        <taxon>Pseudomonadati</taxon>
        <taxon>Pseudomonadota</taxon>
        <taxon>Gammaproteobacteria</taxon>
        <taxon>Pasteurellales</taxon>
        <taxon>Pasteurellaceae</taxon>
        <taxon>Pasteurella</taxon>
    </lineage>
</organism>
<sequence>MRLFIFLLVAVLLLFQYDFWFGKNGYLDYKRTAQQIAQHKQENEKLSQRNQVVAAEIKDLKQGVEAIEERARFQHDMVKPDEIFYHIVKEQK</sequence>
<proteinExistence type="inferred from homology"/>
<keyword id="KW-0131">Cell cycle</keyword>
<keyword id="KW-0132">Cell division</keyword>
<keyword id="KW-0997">Cell inner membrane</keyword>
<keyword id="KW-1003">Cell membrane</keyword>
<keyword id="KW-0175">Coiled coil</keyword>
<keyword id="KW-0472">Membrane</keyword>
<keyword id="KW-1185">Reference proteome</keyword>
<keyword id="KW-0812">Transmembrane</keyword>
<keyword id="KW-1133">Transmembrane helix</keyword>
<gene>
    <name evidence="1" type="primary">ftsB</name>
    <name type="ordered locus">PM1607</name>
</gene>
<name>FTSB_PASMU</name>
<feature type="chain" id="PRO_0000214451" description="Cell division protein FtsB">
    <location>
        <begin position="1"/>
        <end position="92"/>
    </location>
</feature>
<feature type="topological domain" description="Cytoplasmic" evidence="1">
    <location>
        <begin position="1"/>
        <end position="3"/>
    </location>
</feature>
<feature type="transmembrane region" description="Helical" evidence="1">
    <location>
        <begin position="4"/>
        <end position="21"/>
    </location>
</feature>
<feature type="topological domain" description="Periplasmic" evidence="1">
    <location>
        <begin position="22"/>
        <end position="92"/>
    </location>
</feature>
<feature type="coiled-coil region" evidence="1">
    <location>
        <begin position="26"/>
        <end position="74"/>
    </location>
</feature>